<gene>
    <name evidence="1" type="primary">aroK</name>
    <name type="ordered locus">LBJ_4105</name>
</gene>
<dbReference type="EC" id="2.7.1.71" evidence="1"/>
<dbReference type="EMBL" id="CP000351">
    <property type="protein sequence ID" value="ABJ77498.1"/>
    <property type="molecule type" value="Genomic_DNA"/>
</dbReference>
<dbReference type="RefSeq" id="WP_002722209.1">
    <property type="nucleotide sequence ID" value="NC_008511.1"/>
</dbReference>
<dbReference type="SMR" id="Q04NM2"/>
<dbReference type="KEGG" id="lbj:LBJ_4105"/>
<dbReference type="HOGENOM" id="CLU_057607_4_1_12"/>
<dbReference type="UniPathway" id="UPA00053">
    <property type="reaction ID" value="UER00088"/>
</dbReference>
<dbReference type="Proteomes" id="UP000000656">
    <property type="component" value="Chromosome 2"/>
</dbReference>
<dbReference type="GO" id="GO:0005829">
    <property type="term" value="C:cytosol"/>
    <property type="evidence" value="ECO:0007669"/>
    <property type="project" value="TreeGrafter"/>
</dbReference>
<dbReference type="GO" id="GO:0005524">
    <property type="term" value="F:ATP binding"/>
    <property type="evidence" value="ECO:0007669"/>
    <property type="project" value="UniProtKB-UniRule"/>
</dbReference>
<dbReference type="GO" id="GO:0000287">
    <property type="term" value="F:magnesium ion binding"/>
    <property type="evidence" value="ECO:0007669"/>
    <property type="project" value="UniProtKB-UniRule"/>
</dbReference>
<dbReference type="GO" id="GO:0004765">
    <property type="term" value="F:shikimate kinase activity"/>
    <property type="evidence" value="ECO:0007669"/>
    <property type="project" value="UniProtKB-UniRule"/>
</dbReference>
<dbReference type="GO" id="GO:0008652">
    <property type="term" value="P:amino acid biosynthetic process"/>
    <property type="evidence" value="ECO:0007669"/>
    <property type="project" value="UniProtKB-KW"/>
</dbReference>
<dbReference type="GO" id="GO:0009073">
    <property type="term" value="P:aromatic amino acid family biosynthetic process"/>
    <property type="evidence" value="ECO:0007669"/>
    <property type="project" value="UniProtKB-KW"/>
</dbReference>
<dbReference type="GO" id="GO:0009423">
    <property type="term" value="P:chorismate biosynthetic process"/>
    <property type="evidence" value="ECO:0007669"/>
    <property type="project" value="UniProtKB-UniRule"/>
</dbReference>
<dbReference type="CDD" id="cd00464">
    <property type="entry name" value="SK"/>
    <property type="match status" value="1"/>
</dbReference>
<dbReference type="Gene3D" id="3.40.50.300">
    <property type="entry name" value="P-loop containing nucleotide triphosphate hydrolases"/>
    <property type="match status" value="1"/>
</dbReference>
<dbReference type="HAMAP" id="MF_00109">
    <property type="entry name" value="Shikimate_kinase"/>
    <property type="match status" value="1"/>
</dbReference>
<dbReference type="InterPro" id="IPR027417">
    <property type="entry name" value="P-loop_NTPase"/>
</dbReference>
<dbReference type="InterPro" id="IPR031322">
    <property type="entry name" value="Shikimate/glucono_kinase"/>
</dbReference>
<dbReference type="InterPro" id="IPR000623">
    <property type="entry name" value="Shikimate_kinase/TSH1"/>
</dbReference>
<dbReference type="PANTHER" id="PTHR21087">
    <property type="entry name" value="SHIKIMATE KINASE"/>
    <property type="match status" value="1"/>
</dbReference>
<dbReference type="PANTHER" id="PTHR21087:SF16">
    <property type="entry name" value="SHIKIMATE KINASE 1, CHLOROPLASTIC"/>
    <property type="match status" value="1"/>
</dbReference>
<dbReference type="Pfam" id="PF01202">
    <property type="entry name" value="SKI"/>
    <property type="match status" value="1"/>
</dbReference>
<dbReference type="PRINTS" id="PR01100">
    <property type="entry name" value="SHIKIMTKNASE"/>
</dbReference>
<dbReference type="SUPFAM" id="SSF52540">
    <property type="entry name" value="P-loop containing nucleoside triphosphate hydrolases"/>
    <property type="match status" value="1"/>
</dbReference>
<accession>Q04NM2</accession>
<protein>
    <recommendedName>
        <fullName evidence="1">Shikimate kinase</fullName>
        <shortName evidence="1">SK</shortName>
        <ecNumber evidence="1">2.7.1.71</ecNumber>
    </recommendedName>
</protein>
<feature type="chain" id="PRO_1000119057" description="Shikimate kinase">
    <location>
        <begin position="1"/>
        <end position="179"/>
    </location>
</feature>
<feature type="binding site" evidence="1">
    <location>
        <begin position="12"/>
        <end position="17"/>
    </location>
    <ligand>
        <name>ATP</name>
        <dbReference type="ChEBI" id="CHEBI:30616"/>
    </ligand>
</feature>
<feature type="binding site" evidence="1">
    <location>
        <position position="16"/>
    </location>
    <ligand>
        <name>Mg(2+)</name>
        <dbReference type="ChEBI" id="CHEBI:18420"/>
    </ligand>
</feature>
<feature type="binding site" evidence="1">
    <location>
        <position position="34"/>
    </location>
    <ligand>
        <name>substrate</name>
    </ligand>
</feature>
<feature type="binding site" evidence="1">
    <location>
        <position position="61"/>
    </location>
    <ligand>
        <name>substrate</name>
    </ligand>
</feature>
<feature type="binding site" evidence="1">
    <location>
        <position position="83"/>
    </location>
    <ligand>
        <name>substrate</name>
    </ligand>
</feature>
<feature type="binding site" evidence="1">
    <location>
        <position position="131"/>
    </location>
    <ligand>
        <name>ATP</name>
        <dbReference type="ChEBI" id="CHEBI:30616"/>
    </ligand>
</feature>
<feature type="binding site" evidence="1">
    <location>
        <position position="147"/>
    </location>
    <ligand>
        <name>substrate</name>
    </ligand>
</feature>
<organism>
    <name type="scientific">Leptospira borgpetersenii serovar Hardjo-bovis (strain JB197)</name>
    <dbReference type="NCBI Taxonomy" id="355277"/>
    <lineage>
        <taxon>Bacteria</taxon>
        <taxon>Pseudomonadati</taxon>
        <taxon>Spirochaetota</taxon>
        <taxon>Spirochaetia</taxon>
        <taxon>Leptospirales</taxon>
        <taxon>Leptospiraceae</taxon>
        <taxon>Leptospira</taxon>
    </lineage>
</organism>
<evidence type="ECO:0000255" key="1">
    <source>
        <dbReference type="HAMAP-Rule" id="MF_00109"/>
    </source>
</evidence>
<comment type="function">
    <text evidence="1">Catalyzes the specific phosphorylation of the 3-hydroxyl group of shikimic acid using ATP as a cosubstrate.</text>
</comment>
<comment type="catalytic activity">
    <reaction evidence="1">
        <text>shikimate + ATP = 3-phosphoshikimate + ADP + H(+)</text>
        <dbReference type="Rhea" id="RHEA:13121"/>
        <dbReference type="ChEBI" id="CHEBI:15378"/>
        <dbReference type="ChEBI" id="CHEBI:30616"/>
        <dbReference type="ChEBI" id="CHEBI:36208"/>
        <dbReference type="ChEBI" id="CHEBI:145989"/>
        <dbReference type="ChEBI" id="CHEBI:456216"/>
        <dbReference type="EC" id="2.7.1.71"/>
    </reaction>
</comment>
<comment type="cofactor">
    <cofactor evidence="1">
        <name>Mg(2+)</name>
        <dbReference type="ChEBI" id="CHEBI:18420"/>
    </cofactor>
    <text evidence="1">Binds 1 Mg(2+) ion per subunit.</text>
</comment>
<comment type="pathway">
    <text evidence="1">Metabolic intermediate biosynthesis; chorismate biosynthesis; chorismate from D-erythrose 4-phosphate and phosphoenolpyruvate: step 5/7.</text>
</comment>
<comment type="subunit">
    <text evidence="1">Monomer.</text>
</comment>
<comment type="subcellular location">
    <subcellularLocation>
        <location evidence="1">Cytoplasm</location>
    </subcellularLocation>
</comment>
<comment type="similarity">
    <text evidence="1">Belongs to the shikimate kinase family.</text>
</comment>
<keyword id="KW-0028">Amino-acid biosynthesis</keyword>
<keyword id="KW-0057">Aromatic amino acid biosynthesis</keyword>
<keyword id="KW-0067">ATP-binding</keyword>
<keyword id="KW-0963">Cytoplasm</keyword>
<keyword id="KW-0418">Kinase</keyword>
<keyword id="KW-0460">Magnesium</keyword>
<keyword id="KW-0479">Metal-binding</keyword>
<keyword id="KW-0547">Nucleotide-binding</keyword>
<keyword id="KW-0808">Transferase</keyword>
<proteinExistence type="inferred from homology"/>
<name>AROK_LEPBJ</name>
<sequence>MRKNFALIGPRGVGKSKISRKLSKITGMPVVSTDMIAVYEMGGISIPEFIQENEGDWKTFRDLEFQILVKLKTSRGIILDCGGGILFDLDTKGKEVPSSRKIDLLKSIAVVFGLSKPTEILVEKIQNDPTRPPLSAINSYRSIVENRLPHYRSVSDYYLEIDDLKVEEVCSRILHKIEY</sequence>
<reference key="1">
    <citation type="journal article" date="2006" name="Proc. Natl. Acad. Sci. U.S.A.">
        <title>Genome reduction in Leptospira borgpetersenii reflects limited transmission potential.</title>
        <authorList>
            <person name="Bulach D.M."/>
            <person name="Zuerner R.L."/>
            <person name="Wilson P."/>
            <person name="Seemann T."/>
            <person name="McGrath A."/>
            <person name="Cullen P.A."/>
            <person name="Davis J."/>
            <person name="Johnson M."/>
            <person name="Kuczek E."/>
            <person name="Alt D.P."/>
            <person name="Peterson-Burch B."/>
            <person name="Coppel R.L."/>
            <person name="Rood J.I."/>
            <person name="Davies J.K."/>
            <person name="Adler B."/>
        </authorList>
    </citation>
    <scope>NUCLEOTIDE SEQUENCE [LARGE SCALE GENOMIC DNA]</scope>
    <source>
        <strain>JB197</strain>
    </source>
</reference>